<gene>
    <name evidence="1" type="primary">fluC2</name>
    <name evidence="1" type="synonym">crcB2</name>
    <name type="ordered locus">Nham_3430</name>
</gene>
<reference key="1">
    <citation type="submission" date="2006-03" db="EMBL/GenBank/DDBJ databases">
        <title>Complete sequence of chromosome of Nitrobacter hamburgensis X14.</title>
        <authorList>
            <consortium name="US DOE Joint Genome Institute"/>
            <person name="Copeland A."/>
            <person name="Lucas S."/>
            <person name="Lapidus A."/>
            <person name="Barry K."/>
            <person name="Detter J.C."/>
            <person name="Glavina del Rio T."/>
            <person name="Hammon N."/>
            <person name="Israni S."/>
            <person name="Dalin E."/>
            <person name="Tice H."/>
            <person name="Pitluck S."/>
            <person name="Chain P."/>
            <person name="Malfatti S."/>
            <person name="Shin M."/>
            <person name="Vergez L."/>
            <person name="Schmutz J."/>
            <person name="Larimer F."/>
            <person name="Land M."/>
            <person name="Hauser L."/>
            <person name="Kyrpides N."/>
            <person name="Ivanova N."/>
            <person name="Ward B."/>
            <person name="Arp D."/>
            <person name="Klotz M."/>
            <person name="Stein L."/>
            <person name="O'Mullan G."/>
            <person name="Starkenburg S."/>
            <person name="Sayavedra L."/>
            <person name="Poret-Peterson A.T."/>
            <person name="Gentry M.E."/>
            <person name="Bruce D."/>
            <person name="Richardson P."/>
        </authorList>
    </citation>
    <scope>NUCLEOTIDE SEQUENCE [LARGE SCALE GENOMIC DNA]</scope>
    <source>
        <strain>DSM 10229 / NCIMB 13809 / X14</strain>
    </source>
</reference>
<proteinExistence type="inferred from homology"/>
<evidence type="ECO:0000255" key="1">
    <source>
        <dbReference type="HAMAP-Rule" id="MF_00454"/>
    </source>
</evidence>
<sequence length="124" mass="12992">MNYLLVFVGGGLGATVRHAVNMICARAFGTHFPFGTFLINVSGSVVMGLIAGYLAFRGSAAQPWRLFVMTGVLGGYTTFSAFSLDTALLYERGEIGLAALYAIGSVVLAVVGLFAGLALVRHLT</sequence>
<feature type="chain" id="PRO_0000252902" description="Fluoride-specific ion channel FluC 2">
    <location>
        <begin position="1"/>
        <end position="124"/>
    </location>
</feature>
<feature type="transmembrane region" description="Helical" evidence="1">
    <location>
        <begin position="36"/>
        <end position="56"/>
    </location>
</feature>
<feature type="transmembrane region" description="Helical" evidence="1">
    <location>
        <begin position="66"/>
        <end position="86"/>
    </location>
</feature>
<feature type="transmembrane region" description="Helical" evidence="1">
    <location>
        <begin position="100"/>
        <end position="120"/>
    </location>
</feature>
<feature type="binding site" evidence="1">
    <location>
        <position position="74"/>
    </location>
    <ligand>
        <name>Na(+)</name>
        <dbReference type="ChEBI" id="CHEBI:29101"/>
        <note>structural</note>
    </ligand>
</feature>
<feature type="binding site" evidence="1">
    <location>
        <position position="77"/>
    </location>
    <ligand>
        <name>Na(+)</name>
        <dbReference type="ChEBI" id="CHEBI:29101"/>
        <note>structural</note>
    </ligand>
</feature>
<comment type="function">
    <text evidence="1">Fluoride-specific ion channel. Important for reducing fluoride concentration in the cell, thus reducing its toxicity.</text>
</comment>
<comment type="catalytic activity">
    <reaction evidence="1">
        <text>fluoride(in) = fluoride(out)</text>
        <dbReference type="Rhea" id="RHEA:76159"/>
        <dbReference type="ChEBI" id="CHEBI:17051"/>
    </reaction>
    <physiologicalReaction direction="left-to-right" evidence="1">
        <dbReference type="Rhea" id="RHEA:76160"/>
    </physiologicalReaction>
</comment>
<comment type="activity regulation">
    <text evidence="1">Na(+) is not transported, but it plays an essential structural role and its presence is essential for fluoride channel function.</text>
</comment>
<comment type="subcellular location">
    <subcellularLocation>
        <location evidence="1">Cell inner membrane</location>
        <topology evidence="1">Multi-pass membrane protein</topology>
    </subcellularLocation>
</comment>
<comment type="similarity">
    <text evidence="1">Belongs to the fluoride channel Fluc/FEX (TC 1.A.43) family.</text>
</comment>
<protein>
    <recommendedName>
        <fullName evidence="1">Fluoride-specific ion channel FluC 2</fullName>
    </recommendedName>
</protein>
<accession>Q1QHY7</accession>
<organism>
    <name type="scientific">Nitrobacter hamburgensis (strain DSM 10229 / NCIMB 13809 / X14)</name>
    <dbReference type="NCBI Taxonomy" id="323097"/>
    <lineage>
        <taxon>Bacteria</taxon>
        <taxon>Pseudomonadati</taxon>
        <taxon>Pseudomonadota</taxon>
        <taxon>Alphaproteobacteria</taxon>
        <taxon>Hyphomicrobiales</taxon>
        <taxon>Nitrobacteraceae</taxon>
        <taxon>Nitrobacter</taxon>
    </lineage>
</organism>
<name>FLUC2_NITHX</name>
<keyword id="KW-0997">Cell inner membrane</keyword>
<keyword id="KW-1003">Cell membrane</keyword>
<keyword id="KW-0407">Ion channel</keyword>
<keyword id="KW-0406">Ion transport</keyword>
<keyword id="KW-0472">Membrane</keyword>
<keyword id="KW-0479">Metal-binding</keyword>
<keyword id="KW-1185">Reference proteome</keyword>
<keyword id="KW-0915">Sodium</keyword>
<keyword id="KW-0812">Transmembrane</keyword>
<keyword id="KW-1133">Transmembrane helix</keyword>
<keyword id="KW-0813">Transport</keyword>
<dbReference type="EMBL" id="CP000319">
    <property type="protein sequence ID" value="ABE64160.1"/>
    <property type="molecule type" value="Genomic_DNA"/>
</dbReference>
<dbReference type="RefSeq" id="WP_011511811.1">
    <property type="nucleotide sequence ID" value="NC_007964.1"/>
</dbReference>
<dbReference type="SMR" id="Q1QHY7"/>
<dbReference type="STRING" id="323097.Nham_3430"/>
<dbReference type="KEGG" id="nha:Nham_3430"/>
<dbReference type="eggNOG" id="COG0239">
    <property type="taxonomic scope" value="Bacteria"/>
</dbReference>
<dbReference type="HOGENOM" id="CLU_114342_2_3_5"/>
<dbReference type="OrthoDB" id="9806299at2"/>
<dbReference type="Proteomes" id="UP000001953">
    <property type="component" value="Chromosome"/>
</dbReference>
<dbReference type="GO" id="GO:0005886">
    <property type="term" value="C:plasma membrane"/>
    <property type="evidence" value="ECO:0007669"/>
    <property type="project" value="UniProtKB-SubCell"/>
</dbReference>
<dbReference type="GO" id="GO:0062054">
    <property type="term" value="F:fluoride channel activity"/>
    <property type="evidence" value="ECO:0007669"/>
    <property type="project" value="UniProtKB-UniRule"/>
</dbReference>
<dbReference type="GO" id="GO:0046872">
    <property type="term" value="F:metal ion binding"/>
    <property type="evidence" value="ECO:0007669"/>
    <property type="project" value="UniProtKB-KW"/>
</dbReference>
<dbReference type="GO" id="GO:0140114">
    <property type="term" value="P:cellular detoxification of fluoride"/>
    <property type="evidence" value="ECO:0007669"/>
    <property type="project" value="UniProtKB-UniRule"/>
</dbReference>
<dbReference type="HAMAP" id="MF_00454">
    <property type="entry name" value="FluC"/>
    <property type="match status" value="1"/>
</dbReference>
<dbReference type="InterPro" id="IPR003691">
    <property type="entry name" value="FluC"/>
</dbReference>
<dbReference type="NCBIfam" id="TIGR00494">
    <property type="entry name" value="crcB"/>
    <property type="match status" value="1"/>
</dbReference>
<dbReference type="NCBIfam" id="NF010791">
    <property type="entry name" value="PRK14195.1"/>
    <property type="match status" value="1"/>
</dbReference>
<dbReference type="NCBIfam" id="NF010794">
    <property type="entry name" value="PRK14198.1"/>
    <property type="match status" value="1"/>
</dbReference>
<dbReference type="PANTHER" id="PTHR28259">
    <property type="entry name" value="FLUORIDE EXPORT PROTEIN 1-RELATED"/>
    <property type="match status" value="1"/>
</dbReference>
<dbReference type="PANTHER" id="PTHR28259:SF1">
    <property type="entry name" value="FLUORIDE EXPORT PROTEIN 1-RELATED"/>
    <property type="match status" value="1"/>
</dbReference>
<dbReference type="Pfam" id="PF02537">
    <property type="entry name" value="CRCB"/>
    <property type="match status" value="1"/>
</dbReference>